<organism>
    <name type="scientific">Ureaplasma parvum serovar 3 (strain ATCC 700970)</name>
    <dbReference type="NCBI Taxonomy" id="273119"/>
    <lineage>
        <taxon>Bacteria</taxon>
        <taxon>Bacillati</taxon>
        <taxon>Mycoplasmatota</taxon>
        <taxon>Mycoplasmoidales</taxon>
        <taxon>Mycoplasmoidaceae</taxon>
        <taxon>Ureaplasma</taxon>
    </lineage>
</organism>
<keyword id="KW-1185">Reference proteome</keyword>
<accession>Q9PR96</accession>
<dbReference type="EMBL" id="AF222894">
    <property type="protein sequence ID" value="AAF30454.1"/>
    <property type="molecule type" value="Genomic_DNA"/>
</dbReference>
<dbReference type="RefSeq" id="WP_006688416.1">
    <property type="nucleotide sequence ID" value="NC_002162.1"/>
</dbReference>
<dbReference type="STRING" id="273119.UU049"/>
<dbReference type="EnsemblBacteria" id="AAF30454">
    <property type="protein sequence ID" value="AAF30454"/>
    <property type="gene ID" value="UU049"/>
</dbReference>
<dbReference type="GeneID" id="29672180"/>
<dbReference type="KEGG" id="uur:UU049"/>
<dbReference type="eggNOG" id="ENOG5033YTF">
    <property type="taxonomic scope" value="Bacteria"/>
</dbReference>
<dbReference type="HOGENOM" id="CLU_119972_0_0_14"/>
<dbReference type="OrthoDB" id="398973at2"/>
<dbReference type="Proteomes" id="UP000000423">
    <property type="component" value="Chromosome"/>
</dbReference>
<dbReference type="InterPro" id="IPR021222">
    <property type="entry name" value="DUF2714"/>
</dbReference>
<dbReference type="Pfam" id="PF10896">
    <property type="entry name" value="DUF2714"/>
    <property type="match status" value="1"/>
</dbReference>
<sequence>MKKNKSNLTPTTNYFDVFNTYKEKKASVDLITYEELMASVLFDNKLGFESEVYLDFVKKFTLAFEKKLDIWFENFIINFNLNLKFSTTIMIPILVTKANSTTDAINFRNDQNPVYNNFLISYNQKIKKLLLQNHPVQILPHLILFKSNLNGSLVLVFSEKIIASIEQKSGN</sequence>
<protein>
    <recommendedName>
        <fullName>Uncharacterized protein UU049</fullName>
    </recommendedName>
</protein>
<proteinExistence type="predicted"/>
<gene>
    <name type="ordered locus">UU049</name>
</gene>
<reference key="1">
    <citation type="journal article" date="2000" name="Nature">
        <title>The complete sequence of the mucosal pathogen Ureaplasma urealyticum.</title>
        <authorList>
            <person name="Glass J.I."/>
            <person name="Lefkowitz E.J."/>
            <person name="Glass J.S."/>
            <person name="Heiner C.R."/>
            <person name="Chen E.Y."/>
            <person name="Cassell G.H."/>
        </authorList>
    </citation>
    <scope>NUCLEOTIDE SEQUENCE [LARGE SCALE GENOMIC DNA]</scope>
    <source>
        <strain>ATCC 700970</strain>
    </source>
</reference>
<feature type="chain" id="PRO_0000220791" description="Uncharacterized protein UU049">
    <location>
        <begin position="1"/>
        <end position="171"/>
    </location>
</feature>
<name>Y049_UREPA</name>